<organism>
    <name type="scientific">Thermoplasma volcanium (strain ATCC 51530 / DSM 4299 / JCM 9571 / NBRC 15438 / GSS1)</name>
    <dbReference type="NCBI Taxonomy" id="273116"/>
    <lineage>
        <taxon>Archaea</taxon>
        <taxon>Methanobacteriati</taxon>
        <taxon>Thermoplasmatota</taxon>
        <taxon>Thermoplasmata</taxon>
        <taxon>Thermoplasmatales</taxon>
        <taxon>Thermoplasmataceae</taxon>
        <taxon>Thermoplasma</taxon>
    </lineage>
</organism>
<proteinExistence type="inferred from homology"/>
<comment type="catalytic activity">
    <reaction>
        <text>N-(5-phospho-beta-D-ribosyl)anthranilate = 1-(2-carboxyphenylamino)-1-deoxy-D-ribulose 5-phosphate</text>
        <dbReference type="Rhea" id="RHEA:21540"/>
        <dbReference type="ChEBI" id="CHEBI:18277"/>
        <dbReference type="ChEBI" id="CHEBI:58613"/>
        <dbReference type="EC" id="5.3.1.24"/>
    </reaction>
</comment>
<comment type="pathway">
    <text>Amino-acid biosynthesis; L-tryptophan biosynthesis; L-tryptophan from chorismate: step 3/5.</text>
</comment>
<comment type="similarity">
    <text evidence="1">Belongs to the TrpF family.</text>
</comment>
<sequence>MKIKVCGITRLEDAAMVTELGASIVGVVLDELSPRHASHNTIREIAEAGITVAGVYTSEQTVLSSPLFEDYVQLHFDHDPELIRSIHELGRKVISVINFNGIRDLKIKYNAYREADIILVEYKKGVSSIVSQIAPLGLNVGYAGGISDRDIENIIAAKPSIIDVSSSLESSPGIKHPGKVMSFFKKIRDAMDYVS</sequence>
<reference key="1">
    <citation type="journal article" date="2000" name="Proc. Natl. Acad. Sci. U.S.A.">
        <title>Archaeal adaptation to higher temperatures revealed by genomic sequence of Thermoplasma volcanium.</title>
        <authorList>
            <person name="Kawashima T."/>
            <person name="Amano N."/>
            <person name="Koike H."/>
            <person name="Makino S."/>
            <person name="Higuchi S."/>
            <person name="Kawashima-Ohya Y."/>
            <person name="Watanabe K."/>
            <person name="Yamazaki M."/>
            <person name="Kanehori K."/>
            <person name="Kawamoto T."/>
            <person name="Nunoshiba T."/>
            <person name="Yamamoto Y."/>
            <person name="Aramaki H."/>
            <person name="Makino K."/>
            <person name="Suzuki M."/>
        </authorList>
    </citation>
    <scope>NUCLEOTIDE SEQUENCE [LARGE SCALE GENOMIC DNA]</scope>
    <source>
        <strain>ATCC 51530 / DSM 4299 / JCM 9571 / NBRC 15438 / GSS1</strain>
    </source>
</reference>
<name>TRPF_THEVO</name>
<evidence type="ECO:0000305" key="1"/>
<dbReference type="EC" id="5.3.1.24"/>
<dbReference type="EMBL" id="BA000011">
    <property type="protein sequence ID" value="BAB60196.1"/>
    <property type="molecule type" value="Genomic_DNA"/>
</dbReference>
<dbReference type="RefSeq" id="WP_010917283.1">
    <property type="nucleotide sequence ID" value="NC_002689.2"/>
</dbReference>
<dbReference type="SMR" id="Q979V6"/>
<dbReference type="STRING" id="273116.gene:9381848"/>
<dbReference type="PaxDb" id="273116-14325292"/>
<dbReference type="GeneID" id="1441165"/>
<dbReference type="KEGG" id="tvo:TVG1080245"/>
<dbReference type="eggNOG" id="arCOG01983">
    <property type="taxonomic scope" value="Archaea"/>
</dbReference>
<dbReference type="HOGENOM" id="CLU_076364_2_0_2"/>
<dbReference type="OrthoDB" id="27513at2157"/>
<dbReference type="PhylomeDB" id="Q979V6"/>
<dbReference type="UniPathway" id="UPA00035">
    <property type="reaction ID" value="UER00042"/>
</dbReference>
<dbReference type="Proteomes" id="UP000001017">
    <property type="component" value="Chromosome"/>
</dbReference>
<dbReference type="GO" id="GO:0004640">
    <property type="term" value="F:phosphoribosylanthranilate isomerase activity"/>
    <property type="evidence" value="ECO:0007669"/>
    <property type="project" value="UniProtKB-UniRule"/>
</dbReference>
<dbReference type="GO" id="GO:0000162">
    <property type="term" value="P:L-tryptophan biosynthetic process"/>
    <property type="evidence" value="ECO:0007669"/>
    <property type="project" value="UniProtKB-UniRule"/>
</dbReference>
<dbReference type="CDD" id="cd00405">
    <property type="entry name" value="PRAI"/>
    <property type="match status" value="1"/>
</dbReference>
<dbReference type="Gene3D" id="3.20.20.70">
    <property type="entry name" value="Aldolase class I"/>
    <property type="match status" value="1"/>
</dbReference>
<dbReference type="HAMAP" id="MF_00135">
    <property type="entry name" value="PRAI"/>
    <property type="match status" value="1"/>
</dbReference>
<dbReference type="InterPro" id="IPR013785">
    <property type="entry name" value="Aldolase_TIM"/>
</dbReference>
<dbReference type="InterPro" id="IPR001240">
    <property type="entry name" value="PRAI_dom"/>
</dbReference>
<dbReference type="InterPro" id="IPR011060">
    <property type="entry name" value="RibuloseP-bd_barrel"/>
</dbReference>
<dbReference type="InterPro" id="IPR044643">
    <property type="entry name" value="TrpF_fam"/>
</dbReference>
<dbReference type="NCBIfam" id="NF002302">
    <property type="entry name" value="PRK01222.2-2"/>
    <property type="match status" value="1"/>
</dbReference>
<dbReference type="PANTHER" id="PTHR42894">
    <property type="entry name" value="N-(5'-PHOSPHORIBOSYL)ANTHRANILATE ISOMERASE"/>
    <property type="match status" value="1"/>
</dbReference>
<dbReference type="PANTHER" id="PTHR42894:SF1">
    <property type="entry name" value="N-(5'-PHOSPHORIBOSYL)ANTHRANILATE ISOMERASE"/>
    <property type="match status" value="1"/>
</dbReference>
<dbReference type="Pfam" id="PF00697">
    <property type="entry name" value="PRAI"/>
    <property type="match status" value="1"/>
</dbReference>
<dbReference type="SUPFAM" id="SSF51366">
    <property type="entry name" value="Ribulose-phoshate binding barrel"/>
    <property type="match status" value="1"/>
</dbReference>
<protein>
    <recommendedName>
        <fullName>N-(5'-phosphoribosyl)anthranilate isomerase</fullName>
        <shortName>PRAI</shortName>
        <ecNumber>5.3.1.24</ecNumber>
    </recommendedName>
</protein>
<keyword id="KW-0028">Amino-acid biosynthesis</keyword>
<keyword id="KW-0057">Aromatic amino acid biosynthesis</keyword>
<keyword id="KW-0413">Isomerase</keyword>
<keyword id="KW-0822">Tryptophan biosynthesis</keyword>
<accession>Q979V6</accession>
<feature type="chain" id="PRO_0000154416" description="N-(5'-phosphoribosyl)anthranilate isomerase">
    <location>
        <begin position="1"/>
        <end position="195"/>
    </location>
</feature>
<gene>
    <name type="primary">trpF</name>
    <name type="ordered locus">TV1054</name>
    <name type="ORF">TVG1080245</name>
</gene>